<feature type="chain" id="PRO_0000061622" description="Cytochrome b">
    <location>
        <begin position="1"/>
        <end position="379"/>
    </location>
</feature>
<feature type="transmembrane region" description="Helical" evidence="2">
    <location>
        <begin position="33"/>
        <end position="53"/>
    </location>
</feature>
<feature type="transmembrane region" description="Helical" evidence="2">
    <location>
        <begin position="77"/>
        <end position="98"/>
    </location>
</feature>
<feature type="transmembrane region" description="Helical" evidence="2">
    <location>
        <begin position="113"/>
        <end position="133"/>
    </location>
</feature>
<feature type="transmembrane region" description="Helical" evidence="2">
    <location>
        <begin position="178"/>
        <end position="198"/>
    </location>
</feature>
<feature type="transmembrane region" description="Helical" evidence="2">
    <location>
        <begin position="226"/>
        <end position="246"/>
    </location>
</feature>
<feature type="transmembrane region" description="Helical" evidence="2">
    <location>
        <begin position="288"/>
        <end position="308"/>
    </location>
</feature>
<feature type="transmembrane region" description="Helical" evidence="2">
    <location>
        <begin position="320"/>
        <end position="340"/>
    </location>
</feature>
<feature type="transmembrane region" description="Helical" evidence="2">
    <location>
        <begin position="347"/>
        <end position="367"/>
    </location>
</feature>
<feature type="binding site" description="axial binding residue" evidence="2">
    <location>
        <position position="83"/>
    </location>
    <ligand>
        <name>heme b</name>
        <dbReference type="ChEBI" id="CHEBI:60344"/>
        <label>b562</label>
    </ligand>
    <ligandPart>
        <name>Fe</name>
        <dbReference type="ChEBI" id="CHEBI:18248"/>
    </ligandPart>
</feature>
<feature type="binding site" description="axial binding residue" evidence="2">
    <location>
        <position position="97"/>
    </location>
    <ligand>
        <name>heme b</name>
        <dbReference type="ChEBI" id="CHEBI:60344"/>
        <label>b566</label>
    </ligand>
    <ligandPart>
        <name>Fe</name>
        <dbReference type="ChEBI" id="CHEBI:18248"/>
    </ligandPart>
</feature>
<feature type="binding site" description="axial binding residue" evidence="2">
    <location>
        <position position="182"/>
    </location>
    <ligand>
        <name>heme b</name>
        <dbReference type="ChEBI" id="CHEBI:60344"/>
        <label>b562</label>
    </ligand>
    <ligandPart>
        <name>Fe</name>
        <dbReference type="ChEBI" id="CHEBI:18248"/>
    </ligandPart>
</feature>
<feature type="binding site" description="axial binding residue" evidence="2">
    <location>
        <position position="196"/>
    </location>
    <ligand>
        <name>heme b</name>
        <dbReference type="ChEBI" id="CHEBI:60344"/>
        <label>b566</label>
    </ligand>
    <ligandPart>
        <name>Fe</name>
        <dbReference type="ChEBI" id="CHEBI:18248"/>
    </ligandPart>
</feature>
<feature type="binding site" evidence="2">
    <location>
        <position position="201"/>
    </location>
    <ligand>
        <name>a ubiquinone</name>
        <dbReference type="ChEBI" id="CHEBI:16389"/>
    </ligand>
</feature>
<protein>
    <recommendedName>
        <fullName>Cytochrome b</fullName>
    </recommendedName>
    <alternativeName>
        <fullName>Complex III subunit 3</fullName>
    </alternativeName>
    <alternativeName>
        <fullName>Complex III subunit III</fullName>
    </alternativeName>
    <alternativeName>
        <fullName>Cytochrome b-c1 complex subunit 3</fullName>
    </alternativeName>
    <alternativeName>
        <fullName>Ubiquinol-cytochrome-c reductase complex cytochrome b subunit</fullName>
    </alternativeName>
</protein>
<proteinExistence type="inferred from homology"/>
<gene>
    <name type="primary">MT-CYB</name>
    <name type="synonym">COB</name>
    <name type="synonym">CYTB</name>
    <name type="synonym">MTCYB</name>
</gene>
<evidence type="ECO:0000250" key="1"/>
<evidence type="ECO:0000250" key="2">
    <source>
        <dbReference type="UniProtKB" id="P00157"/>
    </source>
</evidence>
<evidence type="ECO:0000255" key="3">
    <source>
        <dbReference type="PROSITE-ProRule" id="PRU00967"/>
    </source>
</evidence>
<evidence type="ECO:0000255" key="4">
    <source>
        <dbReference type="PROSITE-ProRule" id="PRU00968"/>
    </source>
</evidence>
<name>CYB_SUSBA</name>
<sequence length="379" mass="42798">MTNIRKSHPLMKIINNAFIDLPAPSNISSWWNFGSLLGICLILQILTGLFLAMHYTSDTTTAFSSVTHICRDVNYGWLIRYLHANGASMFFICLFIHVGRGLYYGSYMFLETWNIGVILLFTVMATAFMGYVLPWGQMSFWGATVITNLLSAIPYIGTDLVEWIWGGFSVDKATLTRFFAFHFILPFVITALAAVHLLFLHETGSNNPTGISSDMDKIPFHPYYTIKDILGALFMMLILLILVLFSPDLLGDPDNYTPANPLNTPPHIKPEWYFLFAYAIVRSIPNKLGGVLAVVASILILILMPMLHTSKQRSMMFRPLSQCLFWMLVADLITLTWIGGQPVEHPFIIIGQLASILYFLIILVLMPITSIIENNLLKW</sequence>
<reference key="1">
    <citation type="submission" date="2001-05" db="EMBL/GenBank/DDBJ databases">
        <title>Evidence of two genetically deeply divergent species of warthog, Phacochoerus africanus and P. aethiopicus (Artiodactyla: Suiformes) in East Africa.</title>
        <authorList>
            <person name="Randi E."/>
            <person name="d'Huart J.P."/>
            <person name="Lucchini V."/>
            <person name="Aman R."/>
        </authorList>
    </citation>
    <scope>NUCLEOTIDE SEQUENCE [GENOMIC DNA]</scope>
    <source>
        <strain>Isolate Sba1</strain>
    </source>
</reference>
<keyword id="KW-0249">Electron transport</keyword>
<keyword id="KW-0349">Heme</keyword>
<keyword id="KW-0408">Iron</keyword>
<keyword id="KW-0472">Membrane</keyword>
<keyword id="KW-0479">Metal-binding</keyword>
<keyword id="KW-0496">Mitochondrion</keyword>
<keyword id="KW-0999">Mitochondrion inner membrane</keyword>
<keyword id="KW-0679">Respiratory chain</keyword>
<keyword id="KW-0812">Transmembrane</keyword>
<keyword id="KW-1133">Transmembrane helix</keyword>
<keyword id="KW-0813">Transport</keyword>
<keyword id="KW-0830">Ubiquinone</keyword>
<dbReference type="EMBL" id="AJ314554">
    <property type="protein sequence ID" value="CAC85255.1"/>
    <property type="molecule type" value="Genomic_DNA"/>
</dbReference>
<dbReference type="SMR" id="Q8M703"/>
<dbReference type="GO" id="GO:0005743">
    <property type="term" value="C:mitochondrial inner membrane"/>
    <property type="evidence" value="ECO:0007669"/>
    <property type="project" value="UniProtKB-SubCell"/>
</dbReference>
<dbReference type="GO" id="GO:0045275">
    <property type="term" value="C:respiratory chain complex III"/>
    <property type="evidence" value="ECO:0007669"/>
    <property type="project" value="InterPro"/>
</dbReference>
<dbReference type="GO" id="GO:0046872">
    <property type="term" value="F:metal ion binding"/>
    <property type="evidence" value="ECO:0007669"/>
    <property type="project" value="UniProtKB-KW"/>
</dbReference>
<dbReference type="GO" id="GO:0008121">
    <property type="term" value="F:ubiquinol-cytochrome-c reductase activity"/>
    <property type="evidence" value="ECO:0007669"/>
    <property type="project" value="InterPro"/>
</dbReference>
<dbReference type="GO" id="GO:0006122">
    <property type="term" value="P:mitochondrial electron transport, ubiquinol to cytochrome c"/>
    <property type="evidence" value="ECO:0007669"/>
    <property type="project" value="TreeGrafter"/>
</dbReference>
<dbReference type="CDD" id="cd00290">
    <property type="entry name" value="cytochrome_b_C"/>
    <property type="match status" value="1"/>
</dbReference>
<dbReference type="CDD" id="cd00284">
    <property type="entry name" value="Cytochrome_b_N"/>
    <property type="match status" value="1"/>
</dbReference>
<dbReference type="FunFam" id="1.20.810.10:FF:000002">
    <property type="entry name" value="Cytochrome b"/>
    <property type="match status" value="1"/>
</dbReference>
<dbReference type="Gene3D" id="1.20.810.10">
    <property type="entry name" value="Cytochrome Bc1 Complex, Chain C"/>
    <property type="match status" value="1"/>
</dbReference>
<dbReference type="InterPro" id="IPR005798">
    <property type="entry name" value="Cyt_b/b6_C"/>
</dbReference>
<dbReference type="InterPro" id="IPR036150">
    <property type="entry name" value="Cyt_b/b6_C_sf"/>
</dbReference>
<dbReference type="InterPro" id="IPR005797">
    <property type="entry name" value="Cyt_b/b6_N"/>
</dbReference>
<dbReference type="InterPro" id="IPR027387">
    <property type="entry name" value="Cytb/b6-like_sf"/>
</dbReference>
<dbReference type="InterPro" id="IPR030689">
    <property type="entry name" value="Cytochrome_b"/>
</dbReference>
<dbReference type="InterPro" id="IPR048260">
    <property type="entry name" value="Cytochrome_b_C_euk/bac"/>
</dbReference>
<dbReference type="InterPro" id="IPR048259">
    <property type="entry name" value="Cytochrome_b_N_euk/bac"/>
</dbReference>
<dbReference type="InterPro" id="IPR016174">
    <property type="entry name" value="Di-haem_cyt_TM"/>
</dbReference>
<dbReference type="PANTHER" id="PTHR19271">
    <property type="entry name" value="CYTOCHROME B"/>
    <property type="match status" value="1"/>
</dbReference>
<dbReference type="PANTHER" id="PTHR19271:SF16">
    <property type="entry name" value="CYTOCHROME B"/>
    <property type="match status" value="1"/>
</dbReference>
<dbReference type="Pfam" id="PF00032">
    <property type="entry name" value="Cytochrom_B_C"/>
    <property type="match status" value="1"/>
</dbReference>
<dbReference type="Pfam" id="PF00033">
    <property type="entry name" value="Cytochrome_B"/>
    <property type="match status" value="1"/>
</dbReference>
<dbReference type="PIRSF" id="PIRSF038885">
    <property type="entry name" value="COB"/>
    <property type="match status" value="1"/>
</dbReference>
<dbReference type="SUPFAM" id="SSF81648">
    <property type="entry name" value="a domain/subunit of cytochrome bc1 complex (Ubiquinol-cytochrome c reductase)"/>
    <property type="match status" value="1"/>
</dbReference>
<dbReference type="SUPFAM" id="SSF81342">
    <property type="entry name" value="Transmembrane di-heme cytochromes"/>
    <property type="match status" value="1"/>
</dbReference>
<dbReference type="PROSITE" id="PS51003">
    <property type="entry name" value="CYTB_CTER"/>
    <property type="match status" value="1"/>
</dbReference>
<dbReference type="PROSITE" id="PS51002">
    <property type="entry name" value="CYTB_NTER"/>
    <property type="match status" value="1"/>
</dbReference>
<organism>
    <name type="scientific">Sus barbatus</name>
    <name type="common">Bearded pig</name>
    <dbReference type="NCBI Taxonomy" id="41807"/>
    <lineage>
        <taxon>Eukaryota</taxon>
        <taxon>Metazoa</taxon>
        <taxon>Chordata</taxon>
        <taxon>Craniata</taxon>
        <taxon>Vertebrata</taxon>
        <taxon>Euteleostomi</taxon>
        <taxon>Mammalia</taxon>
        <taxon>Eutheria</taxon>
        <taxon>Laurasiatheria</taxon>
        <taxon>Artiodactyla</taxon>
        <taxon>Suina</taxon>
        <taxon>Suidae</taxon>
        <taxon>Sus</taxon>
    </lineage>
</organism>
<accession>Q8M703</accession>
<geneLocation type="mitochondrion"/>
<comment type="function">
    <text evidence="2">Component of the ubiquinol-cytochrome c reductase complex (complex III or cytochrome b-c1 complex) that is part of the mitochondrial respiratory chain. The b-c1 complex mediates electron transfer from ubiquinol to cytochrome c. Contributes to the generation of a proton gradient across the mitochondrial membrane that is then used for ATP synthesis.</text>
</comment>
<comment type="cofactor">
    <cofactor evidence="2">
        <name>heme b</name>
        <dbReference type="ChEBI" id="CHEBI:60344"/>
    </cofactor>
    <text evidence="2">Binds 2 heme b groups non-covalently.</text>
</comment>
<comment type="subunit">
    <text evidence="2">The cytochrome bc1 complex contains 11 subunits: 3 respiratory subunits (MT-CYB, CYC1 and UQCRFS1), 2 core proteins (UQCRC1 and UQCRC2) and 6 low-molecular weight proteins (UQCRH/QCR6, UQCRB/QCR7, UQCRQ/QCR8, UQCR10/QCR9, UQCR11/QCR10 and a cleavage product of UQCRFS1). This cytochrome bc1 complex then forms a dimer.</text>
</comment>
<comment type="subcellular location">
    <subcellularLocation>
        <location evidence="2">Mitochondrion inner membrane</location>
        <topology evidence="2">Multi-pass membrane protein</topology>
    </subcellularLocation>
</comment>
<comment type="miscellaneous">
    <text evidence="1">Heme 1 (or BL or b562) is low-potential and absorbs at about 562 nm, and heme 2 (or BH or b566) is high-potential and absorbs at about 566 nm.</text>
</comment>
<comment type="similarity">
    <text evidence="3 4">Belongs to the cytochrome b family.</text>
</comment>
<comment type="caution">
    <text evidence="2">The full-length protein contains only eight transmembrane helices, not nine as predicted by bioinformatics tools.</text>
</comment>